<gene>
    <name evidence="1" type="primary">queA</name>
    <name type="ordered locus">BUsg_124</name>
</gene>
<sequence>MHLSNFYFKIPKSLIAFYPCFIRSQSRLLIINGHTGKIAHKFFFNILNEINSGDLIIFNDTKVIPARLFGYKKSGGRVEVLLERILNKNSILASIKSSNEIKMNSYLFFGKKNKIKSFIIGYKNPFYIIKFLHNKKSVIDIFNNIGHIPLPPYIKRFNEKIDSSLYQTVYKKNLGSVAAPTAGLHFDLPLLEALSKKGVDIDFLTLHIGSGTFQPIRTAKIEKHIMHSELVEVSSNLIQKIKLCKKKGGRIIAVGTTTLRALESAYHSNSWNNKKNYVKDTNIFIYPGYKHNVVDALITNFHFPESTLIMLVCSFLGYKNTMNAYHEAIKNNYRFFSYGDAMYITYNTHAPYEKILT</sequence>
<keyword id="KW-0963">Cytoplasm</keyword>
<keyword id="KW-0671">Queuosine biosynthesis</keyword>
<keyword id="KW-0949">S-adenosyl-L-methionine</keyword>
<keyword id="KW-0808">Transferase</keyword>
<proteinExistence type="inferred from homology"/>
<reference key="1">
    <citation type="journal article" date="2002" name="Science">
        <title>50 million years of genomic stasis in endosymbiotic bacteria.</title>
        <authorList>
            <person name="Tamas I."/>
            <person name="Klasson L."/>
            <person name="Canbaeck B."/>
            <person name="Naeslund A.K."/>
            <person name="Eriksson A.-S."/>
            <person name="Wernegreen J.J."/>
            <person name="Sandstroem J.P."/>
            <person name="Moran N.A."/>
            <person name="Andersson S.G.E."/>
        </authorList>
    </citation>
    <scope>NUCLEOTIDE SEQUENCE [LARGE SCALE GENOMIC DNA]</scope>
    <source>
        <strain>Sg</strain>
    </source>
</reference>
<dbReference type="EC" id="2.4.99.17" evidence="1"/>
<dbReference type="EMBL" id="AE013218">
    <property type="protein sequence ID" value="AAM67692.1"/>
    <property type="molecule type" value="Genomic_DNA"/>
</dbReference>
<dbReference type="RefSeq" id="WP_011053659.1">
    <property type="nucleotide sequence ID" value="NC_004061.1"/>
</dbReference>
<dbReference type="SMR" id="Q8KA10"/>
<dbReference type="STRING" id="198804.BUsg_124"/>
<dbReference type="GeneID" id="93003594"/>
<dbReference type="KEGG" id="bas:BUsg_124"/>
<dbReference type="eggNOG" id="COG0809">
    <property type="taxonomic scope" value="Bacteria"/>
</dbReference>
<dbReference type="HOGENOM" id="CLU_039110_1_0_6"/>
<dbReference type="UniPathway" id="UPA00392"/>
<dbReference type="Proteomes" id="UP000000416">
    <property type="component" value="Chromosome"/>
</dbReference>
<dbReference type="GO" id="GO:0005737">
    <property type="term" value="C:cytoplasm"/>
    <property type="evidence" value="ECO:0007669"/>
    <property type="project" value="UniProtKB-SubCell"/>
</dbReference>
<dbReference type="GO" id="GO:0051075">
    <property type="term" value="F:S-adenosylmethionine:tRNA ribosyltransferase-isomerase activity"/>
    <property type="evidence" value="ECO:0007669"/>
    <property type="project" value="UniProtKB-EC"/>
</dbReference>
<dbReference type="GO" id="GO:0008616">
    <property type="term" value="P:queuosine biosynthetic process"/>
    <property type="evidence" value="ECO:0007669"/>
    <property type="project" value="UniProtKB-UniRule"/>
</dbReference>
<dbReference type="GO" id="GO:0002099">
    <property type="term" value="P:tRNA wobble guanine modification"/>
    <property type="evidence" value="ECO:0007669"/>
    <property type="project" value="TreeGrafter"/>
</dbReference>
<dbReference type="FunFam" id="3.40.1780.10:FF:000001">
    <property type="entry name" value="S-adenosylmethionine:tRNA ribosyltransferase-isomerase"/>
    <property type="match status" value="1"/>
</dbReference>
<dbReference type="Gene3D" id="2.40.10.240">
    <property type="entry name" value="QueA-like"/>
    <property type="match status" value="1"/>
</dbReference>
<dbReference type="Gene3D" id="3.40.1780.10">
    <property type="entry name" value="QueA-like"/>
    <property type="match status" value="1"/>
</dbReference>
<dbReference type="HAMAP" id="MF_00113">
    <property type="entry name" value="QueA"/>
    <property type="match status" value="1"/>
</dbReference>
<dbReference type="InterPro" id="IPR003699">
    <property type="entry name" value="QueA"/>
</dbReference>
<dbReference type="InterPro" id="IPR042118">
    <property type="entry name" value="QueA_dom1"/>
</dbReference>
<dbReference type="InterPro" id="IPR042119">
    <property type="entry name" value="QueA_dom2"/>
</dbReference>
<dbReference type="InterPro" id="IPR036100">
    <property type="entry name" value="QueA_sf"/>
</dbReference>
<dbReference type="NCBIfam" id="NF001140">
    <property type="entry name" value="PRK00147.1"/>
    <property type="match status" value="1"/>
</dbReference>
<dbReference type="NCBIfam" id="TIGR00113">
    <property type="entry name" value="queA"/>
    <property type="match status" value="1"/>
</dbReference>
<dbReference type="PANTHER" id="PTHR30307">
    <property type="entry name" value="S-ADENOSYLMETHIONINE:TRNA RIBOSYLTRANSFERASE-ISOMERASE"/>
    <property type="match status" value="1"/>
</dbReference>
<dbReference type="PANTHER" id="PTHR30307:SF0">
    <property type="entry name" value="S-ADENOSYLMETHIONINE:TRNA RIBOSYLTRANSFERASE-ISOMERASE"/>
    <property type="match status" value="1"/>
</dbReference>
<dbReference type="Pfam" id="PF02547">
    <property type="entry name" value="Queuosine_synth"/>
    <property type="match status" value="1"/>
</dbReference>
<dbReference type="SUPFAM" id="SSF111337">
    <property type="entry name" value="QueA-like"/>
    <property type="match status" value="1"/>
</dbReference>
<feature type="chain" id="PRO_0000165389" description="S-adenosylmethionine:tRNA ribosyltransferase-isomerase">
    <location>
        <begin position="1"/>
        <end position="357"/>
    </location>
</feature>
<organism>
    <name type="scientific">Buchnera aphidicola subsp. Schizaphis graminum (strain Sg)</name>
    <dbReference type="NCBI Taxonomy" id="198804"/>
    <lineage>
        <taxon>Bacteria</taxon>
        <taxon>Pseudomonadati</taxon>
        <taxon>Pseudomonadota</taxon>
        <taxon>Gammaproteobacteria</taxon>
        <taxon>Enterobacterales</taxon>
        <taxon>Erwiniaceae</taxon>
        <taxon>Buchnera</taxon>
    </lineage>
</organism>
<accession>Q8KA10</accession>
<evidence type="ECO:0000255" key="1">
    <source>
        <dbReference type="HAMAP-Rule" id="MF_00113"/>
    </source>
</evidence>
<name>QUEA_BUCAP</name>
<comment type="function">
    <text evidence="1">Transfers and isomerizes the ribose moiety from AdoMet to the 7-aminomethyl group of 7-deazaguanine (preQ1-tRNA) to give epoxyqueuosine (oQ-tRNA).</text>
</comment>
<comment type="catalytic activity">
    <reaction evidence="1">
        <text>7-aminomethyl-7-carbaguanosine(34) in tRNA + S-adenosyl-L-methionine = epoxyqueuosine(34) in tRNA + adenine + L-methionine + 2 H(+)</text>
        <dbReference type="Rhea" id="RHEA:32155"/>
        <dbReference type="Rhea" id="RHEA-COMP:10342"/>
        <dbReference type="Rhea" id="RHEA-COMP:18582"/>
        <dbReference type="ChEBI" id="CHEBI:15378"/>
        <dbReference type="ChEBI" id="CHEBI:16708"/>
        <dbReference type="ChEBI" id="CHEBI:57844"/>
        <dbReference type="ChEBI" id="CHEBI:59789"/>
        <dbReference type="ChEBI" id="CHEBI:82833"/>
        <dbReference type="ChEBI" id="CHEBI:194443"/>
        <dbReference type="EC" id="2.4.99.17"/>
    </reaction>
</comment>
<comment type="pathway">
    <text evidence="1">tRNA modification; tRNA-queuosine biosynthesis.</text>
</comment>
<comment type="subunit">
    <text evidence="1">Monomer.</text>
</comment>
<comment type="subcellular location">
    <subcellularLocation>
        <location evidence="1">Cytoplasm</location>
    </subcellularLocation>
</comment>
<comment type="similarity">
    <text evidence="1">Belongs to the QueA family.</text>
</comment>
<protein>
    <recommendedName>
        <fullName evidence="1">S-adenosylmethionine:tRNA ribosyltransferase-isomerase</fullName>
        <ecNumber evidence="1">2.4.99.17</ecNumber>
    </recommendedName>
    <alternativeName>
        <fullName evidence="1">Queuosine biosynthesis protein QueA</fullName>
    </alternativeName>
</protein>